<proteinExistence type="inferred from homology"/>
<reference key="1">
    <citation type="journal article" date="1996" name="Microbiology">
        <title>Identification of an EF-Tu protein that is periplasm-associated and processed in Neisseria gonorrhoeae.</title>
        <authorList>
            <person name="Porcella S.F."/>
            <person name="Belland R.J."/>
            <person name="Judd R.C."/>
        </authorList>
    </citation>
    <scope>NUCLEOTIDE SEQUENCE [GENOMIC DNA]</scope>
    <source>
        <strain>MS11</strain>
    </source>
</reference>
<evidence type="ECO:0000250" key="1"/>
<evidence type="ECO:0000255" key="2">
    <source>
        <dbReference type="HAMAP-Rule" id="MF_00118"/>
    </source>
</evidence>
<dbReference type="EC" id="3.6.5.3" evidence="2"/>
<dbReference type="EMBL" id="L36380">
    <property type="protein sequence ID" value="AAB41517.2"/>
    <property type="molecule type" value="Genomic_DNA"/>
</dbReference>
<dbReference type="PIR" id="T10168">
    <property type="entry name" value="T10168"/>
</dbReference>
<dbReference type="SMR" id="P48864"/>
<dbReference type="GO" id="GO:0005829">
    <property type="term" value="C:cytosol"/>
    <property type="evidence" value="ECO:0007669"/>
    <property type="project" value="TreeGrafter"/>
</dbReference>
<dbReference type="GO" id="GO:0005525">
    <property type="term" value="F:GTP binding"/>
    <property type="evidence" value="ECO:0007669"/>
    <property type="project" value="UniProtKB-UniRule"/>
</dbReference>
<dbReference type="GO" id="GO:0003924">
    <property type="term" value="F:GTPase activity"/>
    <property type="evidence" value="ECO:0007669"/>
    <property type="project" value="InterPro"/>
</dbReference>
<dbReference type="GO" id="GO:0097216">
    <property type="term" value="F:guanosine tetraphosphate binding"/>
    <property type="evidence" value="ECO:0007669"/>
    <property type="project" value="UniProtKB-ARBA"/>
</dbReference>
<dbReference type="GO" id="GO:0003746">
    <property type="term" value="F:translation elongation factor activity"/>
    <property type="evidence" value="ECO:0007669"/>
    <property type="project" value="UniProtKB-UniRule"/>
</dbReference>
<dbReference type="CDD" id="cd01884">
    <property type="entry name" value="EF_Tu"/>
    <property type="match status" value="1"/>
</dbReference>
<dbReference type="CDD" id="cd03697">
    <property type="entry name" value="EFTU_II"/>
    <property type="match status" value="1"/>
</dbReference>
<dbReference type="CDD" id="cd03707">
    <property type="entry name" value="EFTU_III"/>
    <property type="match status" value="1"/>
</dbReference>
<dbReference type="FunFam" id="2.40.30.10:FF:000001">
    <property type="entry name" value="Elongation factor Tu"/>
    <property type="match status" value="1"/>
</dbReference>
<dbReference type="FunFam" id="3.40.50.300:FF:000003">
    <property type="entry name" value="Elongation factor Tu"/>
    <property type="match status" value="1"/>
</dbReference>
<dbReference type="Gene3D" id="3.40.50.300">
    <property type="entry name" value="P-loop containing nucleotide triphosphate hydrolases"/>
    <property type="match status" value="1"/>
</dbReference>
<dbReference type="Gene3D" id="2.40.30.10">
    <property type="entry name" value="Translation factors"/>
    <property type="match status" value="2"/>
</dbReference>
<dbReference type="HAMAP" id="MF_00118_B">
    <property type="entry name" value="EF_Tu_B"/>
    <property type="match status" value="1"/>
</dbReference>
<dbReference type="InterPro" id="IPR041709">
    <property type="entry name" value="EF-Tu_GTP-bd"/>
</dbReference>
<dbReference type="InterPro" id="IPR050055">
    <property type="entry name" value="EF-Tu_GTPase"/>
</dbReference>
<dbReference type="InterPro" id="IPR004161">
    <property type="entry name" value="EFTu-like_2"/>
</dbReference>
<dbReference type="InterPro" id="IPR033720">
    <property type="entry name" value="EFTU_2"/>
</dbReference>
<dbReference type="InterPro" id="IPR031157">
    <property type="entry name" value="G_TR_CS"/>
</dbReference>
<dbReference type="InterPro" id="IPR027417">
    <property type="entry name" value="P-loop_NTPase"/>
</dbReference>
<dbReference type="InterPro" id="IPR005225">
    <property type="entry name" value="Small_GTP-bd"/>
</dbReference>
<dbReference type="InterPro" id="IPR000795">
    <property type="entry name" value="T_Tr_GTP-bd_dom"/>
</dbReference>
<dbReference type="InterPro" id="IPR009000">
    <property type="entry name" value="Transl_B-barrel_sf"/>
</dbReference>
<dbReference type="InterPro" id="IPR009001">
    <property type="entry name" value="Transl_elong_EF1A/Init_IF2_C"/>
</dbReference>
<dbReference type="InterPro" id="IPR004541">
    <property type="entry name" value="Transl_elong_EFTu/EF1A_bac/org"/>
</dbReference>
<dbReference type="InterPro" id="IPR004160">
    <property type="entry name" value="Transl_elong_EFTu/EF1A_C"/>
</dbReference>
<dbReference type="NCBIfam" id="TIGR00485">
    <property type="entry name" value="EF-Tu"/>
    <property type="match status" value="1"/>
</dbReference>
<dbReference type="NCBIfam" id="NF000766">
    <property type="entry name" value="PRK00049.1"/>
    <property type="match status" value="1"/>
</dbReference>
<dbReference type="NCBIfam" id="NF009372">
    <property type="entry name" value="PRK12735.1"/>
    <property type="match status" value="1"/>
</dbReference>
<dbReference type="NCBIfam" id="NF009373">
    <property type="entry name" value="PRK12736.1"/>
    <property type="match status" value="1"/>
</dbReference>
<dbReference type="NCBIfam" id="TIGR00231">
    <property type="entry name" value="small_GTP"/>
    <property type="match status" value="1"/>
</dbReference>
<dbReference type="PANTHER" id="PTHR43721:SF22">
    <property type="entry name" value="ELONGATION FACTOR TU, MITOCHONDRIAL"/>
    <property type="match status" value="1"/>
</dbReference>
<dbReference type="PANTHER" id="PTHR43721">
    <property type="entry name" value="ELONGATION FACTOR TU-RELATED"/>
    <property type="match status" value="1"/>
</dbReference>
<dbReference type="Pfam" id="PF00009">
    <property type="entry name" value="GTP_EFTU"/>
    <property type="match status" value="1"/>
</dbReference>
<dbReference type="Pfam" id="PF03144">
    <property type="entry name" value="GTP_EFTU_D2"/>
    <property type="match status" value="1"/>
</dbReference>
<dbReference type="Pfam" id="PF03143">
    <property type="entry name" value="GTP_EFTU_D3"/>
    <property type="match status" value="1"/>
</dbReference>
<dbReference type="PRINTS" id="PR00315">
    <property type="entry name" value="ELONGATNFCT"/>
</dbReference>
<dbReference type="SUPFAM" id="SSF50465">
    <property type="entry name" value="EF-Tu/eEF-1alpha/eIF2-gamma C-terminal domain"/>
    <property type="match status" value="1"/>
</dbReference>
<dbReference type="SUPFAM" id="SSF52540">
    <property type="entry name" value="P-loop containing nucleoside triphosphate hydrolases"/>
    <property type="match status" value="1"/>
</dbReference>
<dbReference type="SUPFAM" id="SSF50447">
    <property type="entry name" value="Translation proteins"/>
    <property type="match status" value="1"/>
</dbReference>
<dbReference type="PROSITE" id="PS00301">
    <property type="entry name" value="G_TR_1"/>
    <property type="match status" value="1"/>
</dbReference>
<dbReference type="PROSITE" id="PS51722">
    <property type="entry name" value="G_TR_2"/>
    <property type="match status" value="1"/>
</dbReference>
<sequence>MAKEKFERSKPHVNVGTIGHVDHGKTTLTAALTTILAKKFGGAAKAYDQIDNAPEEKARGITINTSHVEYETETRHYAHVDCPGHADYVKNMITGAAQMDGAILVCSAADGPMPQTREHILLARQVGVPYIIVFMNKCDMVDDAELFQLVEMEIRDLLSSYDFPGDDCPIVQGSALKALEGDAAYEEKIFELATALDRYIPTPERAVDKPFLLPIEDVFSISGRGTVVTGRVERGIIHVGDEIEIVGLKETQKTTCTGVEMFRKLLDEGQAGDNVGVLLRGTKREDVERGQVLAKRGTITPHTKFKAEVYVLSKEEGGPHTPFFANYRPQFYFRTTDVTGTITLEKGVEMVMPGENVTITVELIAPIAMEEGLRFAIREGGRTVGAGVVSSVIA</sequence>
<gene>
    <name evidence="2" type="primary">tuf</name>
    <name type="synonym">tufA</name>
</gene>
<protein>
    <recommendedName>
        <fullName evidence="2">Elongation factor Tu</fullName>
        <shortName evidence="2">EF-Tu</shortName>
        <ecNumber evidence="2">3.6.5.3</ecNumber>
    </recommendedName>
</protein>
<organism>
    <name type="scientific">Neisseria gonorrhoeae</name>
    <dbReference type="NCBI Taxonomy" id="485"/>
    <lineage>
        <taxon>Bacteria</taxon>
        <taxon>Pseudomonadati</taxon>
        <taxon>Pseudomonadota</taxon>
        <taxon>Betaproteobacteria</taxon>
        <taxon>Neisseriales</taxon>
        <taxon>Neisseriaceae</taxon>
        <taxon>Neisseria</taxon>
    </lineage>
</organism>
<feature type="chain" id="PRO_0000091355" description="Elongation factor Tu">
    <location>
        <begin position="1"/>
        <end position="394"/>
    </location>
</feature>
<feature type="domain" description="tr-type G">
    <location>
        <begin position="10"/>
        <end position="204"/>
    </location>
</feature>
<feature type="region of interest" description="G1" evidence="1">
    <location>
        <begin position="19"/>
        <end position="26"/>
    </location>
</feature>
<feature type="region of interest" description="G2" evidence="1">
    <location>
        <begin position="60"/>
        <end position="64"/>
    </location>
</feature>
<feature type="region of interest" description="G3" evidence="1">
    <location>
        <begin position="81"/>
        <end position="84"/>
    </location>
</feature>
<feature type="region of interest" description="G4" evidence="1">
    <location>
        <begin position="136"/>
        <end position="139"/>
    </location>
</feature>
<feature type="region of interest" description="G5" evidence="1">
    <location>
        <begin position="174"/>
        <end position="176"/>
    </location>
</feature>
<feature type="binding site" evidence="2">
    <location>
        <begin position="19"/>
        <end position="26"/>
    </location>
    <ligand>
        <name>GTP</name>
        <dbReference type="ChEBI" id="CHEBI:37565"/>
    </ligand>
</feature>
<feature type="binding site" evidence="2">
    <location>
        <position position="26"/>
    </location>
    <ligand>
        <name>Mg(2+)</name>
        <dbReference type="ChEBI" id="CHEBI:18420"/>
    </ligand>
</feature>
<feature type="binding site" evidence="2">
    <location>
        <begin position="81"/>
        <end position="85"/>
    </location>
    <ligand>
        <name>GTP</name>
        <dbReference type="ChEBI" id="CHEBI:37565"/>
    </ligand>
</feature>
<feature type="binding site" evidence="2">
    <location>
        <begin position="136"/>
        <end position="139"/>
    </location>
    <ligand>
        <name>GTP</name>
        <dbReference type="ChEBI" id="CHEBI:37565"/>
    </ligand>
</feature>
<keyword id="KW-0963">Cytoplasm</keyword>
<keyword id="KW-0251">Elongation factor</keyword>
<keyword id="KW-0342">GTP-binding</keyword>
<keyword id="KW-0378">Hydrolase</keyword>
<keyword id="KW-0460">Magnesium</keyword>
<keyword id="KW-0479">Metal-binding</keyword>
<keyword id="KW-0547">Nucleotide-binding</keyword>
<keyword id="KW-0648">Protein biosynthesis</keyword>
<comment type="function">
    <text evidence="2">GTP hydrolase that promotes the GTP-dependent binding of aminoacyl-tRNA to the A-site of ribosomes during protein biosynthesis.</text>
</comment>
<comment type="catalytic activity">
    <reaction evidence="2">
        <text>GTP + H2O = GDP + phosphate + H(+)</text>
        <dbReference type="Rhea" id="RHEA:19669"/>
        <dbReference type="ChEBI" id="CHEBI:15377"/>
        <dbReference type="ChEBI" id="CHEBI:15378"/>
        <dbReference type="ChEBI" id="CHEBI:37565"/>
        <dbReference type="ChEBI" id="CHEBI:43474"/>
        <dbReference type="ChEBI" id="CHEBI:58189"/>
        <dbReference type="EC" id="3.6.5.3"/>
    </reaction>
    <physiologicalReaction direction="left-to-right" evidence="2">
        <dbReference type="Rhea" id="RHEA:19670"/>
    </physiologicalReaction>
</comment>
<comment type="subunit">
    <text evidence="2">Monomer.</text>
</comment>
<comment type="subcellular location">
    <subcellularLocation>
        <location>Cytoplasm</location>
    </subcellularLocation>
</comment>
<comment type="similarity">
    <text evidence="2">Belongs to the TRAFAC class translation factor GTPase superfamily. Classic translation factor GTPase family. EF-Tu/EF-1A subfamily.</text>
</comment>
<name>EFTU_NEIGO</name>
<accession>P48864</accession>